<reference key="1">
    <citation type="journal article" date="1999" name="Biol. J. Linn. Soc. Lond.">
        <title>Origin of the Sulawesi macaques (Cercopithecidae: Macaca) as suggested by mitochondrial DNA phylogeny.</title>
        <authorList>
            <person name="Evans B.J."/>
            <person name="Morales J.C."/>
            <person name="Supriatna J."/>
            <person name="Melnick D.J."/>
        </authorList>
    </citation>
    <scope>NUCLEOTIDE SEQUENCE [GENOMIC DNA]</scope>
</reference>
<accession>Q7J3C3</accession>
<feature type="chain" id="PRO_0000118440" description="NADH-ubiquinone oxidoreductase chain 4L">
    <location>
        <begin position="1"/>
        <end position="98"/>
    </location>
</feature>
<feature type="transmembrane region" description="Helical" evidence="3">
    <location>
        <begin position="1"/>
        <end position="21"/>
    </location>
</feature>
<feature type="transmembrane region" description="Helical" evidence="3">
    <location>
        <begin position="27"/>
        <end position="47"/>
    </location>
</feature>
<feature type="transmembrane region" description="Helical" evidence="3">
    <location>
        <begin position="61"/>
        <end position="81"/>
    </location>
</feature>
<gene>
    <name type="primary">MT-ND4L</name>
    <name type="synonym">MTND4L</name>
    <name type="synonym">NADH4L</name>
    <name type="synonym">ND4L</name>
</gene>
<dbReference type="EC" id="7.1.1.2"/>
<dbReference type="EMBL" id="AF091401">
    <property type="protein sequence ID" value="AAD24690.1"/>
    <property type="molecule type" value="Genomic_DNA"/>
</dbReference>
<dbReference type="EMBL" id="AF091402">
    <property type="protein sequence ID" value="AAD24692.1"/>
    <property type="molecule type" value="Genomic_DNA"/>
</dbReference>
<dbReference type="SMR" id="Q7J3C3"/>
<dbReference type="STRING" id="9541.ENSMFAP00000046144"/>
<dbReference type="Proteomes" id="UP000233100">
    <property type="component" value="Mitochondrion"/>
</dbReference>
<dbReference type="GO" id="GO:0005743">
    <property type="term" value="C:mitochondrial inner membrane"/>
    <property type="evidence" value="ECO:0000250"/>
    <property type="project" value="UniProtKB"/>
</dbReference>
<dbReference type="GO" id="GO:0045271">
    <property type="term" value="C:respiratory chain complex I"/>
    <property type="evidence" value="ECO:0000250"/>
    <property type="project" value="UniProtKB"/>
</dbReference>
<dbReference type="GO" id="GO:0008137">
    <property type="term" value="F:NADH dehydrogenase (ubiquinone) activity"/>
    <property type="evidence" value="ECO:0000250"/>
    <property type="project" value="UniProtKB"/>
</dbReference>
<dbReference type="GO" id="GO:0042773">
    <property type="term" value="P:ATP synthesis coupled electron transport"/>
    <property type="evidence" value="ECO:0007669"/>
    <property type="project" value="InterPro"/>
</dbReference>
<dbReference type="FunFam" id="1.10.287.3510:FF:000002">
    <property type="entry name" value="NADH-ubiquinone oxidoreductase chain 4L"/>
    <property type="match status" value="1"/>
</dbReference>
<dbReference type="Gene3D" id="1.10.287.3510">
    <property type="match status" value="1"/>
</dbReference>
<dbReference type="InterPro" id="IPR001133">
    <property type="entry name" value="NADH_UbQ_OxRdtase_chain4L/K"/>
</dbReference>
<dbReference type="InterPro" id="IPR039428">
    <property type="entry name" value="NUOK/Mnh_C1-like"/>
</dbReference>
<dbReference type="PANTHER" id="PTHR11434:SF0">
    <property type="entry name" value="NADH-UBIQUINONE OXIDOREDUCTASE CHAIN 4L"/>
    <property type="match status" value="1"/>
</dbReference>
<dbReference type="PANTHER" id="PTHR11434">
    <property type="entry name" value="NADH-UBIQUINONE OXIDOREDUCTASE SUBUNIT ND4L"/>
    <property type="match status" value="1"/>
</dbReference>
<dbReference type="Pfam" id="PF00420">
    <property type="entry name" value="Oxidored_q2"/>
    <property type="match status" value="1"/>
</dbReference>
<proteinExistence type="inferred from homology"/>
<keyword id="KW-0249">Electron transport</keyword>
<keyword id="KW-0472">Membrane</keyword>
<keyword id="KW-0496">Mitochondrion</keyword>
<keyword id="KW-0999">Mitochondrion inner membrane</keyword>
<keyword id="KW-0520">NAD</keyword>
<keyword id="KW-1185">Reference proteome</keyword>
<keyword id="KW-0679">Respiratory chain</keyword>
<keyword id="KW-1278">Translocase</keyword>
<keyword id="KW-0812">Transmembrane</keyword>
<keyword id="KW-1133">Transmembrane helix</keyword>
<keyword id="KW-0813">Transport</keyword>
<keyword id="KW-0830">Ubiquinone</keyword>
<geneLocation type="mitochondrion"/>
<evidence type="ECO:0000250" key="1">
    <source>
        <dbReference type="UniProtKB" id="P03901"/>
    </source>
</evidence>
<evidence type="ECO:0000250" key="2">
    <source>
        <dbReference type="UniProtKB" id="P03902"/>
    </source>
</evidence>
<evidence type="ECO:0000255" key="3"/>
<evidence type="ECO:0000305" key="4"/>
<name>NU4LM_MACFA</name>
<organism>
    <name type="scientific">Macaca fascicularis</name>
    <name type="common">Crab-eating macaque</name>
    <name type="synonym">Cynomolgus monkey</name>
    <dbReference type="NCBI Taxonomy" id="9541"/>
    <lineage>
        <taxon>Eukaryota</taxon>
        <taxon>Metazoa</taxon>
        <taxon>Chordata</taxon>
        <taxon>Craniata</taxon>
        <taxon>Vertebrata</taxon>
        <taxon>Euteleostomi</taxon>
        <taxon>Mammalia</taxon>
        <taxon>Eutheria</taxon>
        <taxon>Euarchontoglires</taxon>
        <taxon>Primates</taxon>
        <taxon>Haplorrhini</taxon>
        <taxon>Catarrhini</taxon>
        <taxon>Cercopithecidae</taxon>
        <taxon>Cercopithecinae</taxon>
        <taxon>Macaca</taxon>
    </lineage>
</organism>
<sequence length="98" mass="10787">MTPTYMNIMLAFTISLLGMLTYRSHLVASLLCLEGMMMSLFIMATLIASNTHFPLVNIMPIILLVFAACETAVGLALLISISNTYGLDYVHNLNLLQC</sequence>
<comment type="function">
    <text evidence="1">Core subunit of the mitochondrial membrane respiratory chain NADH dehydrogenase (Complex I) which catalyzes electron transfer from NADH through the respiratory chain, using ubiquinone as an electron acceptor. Part of the enzyme membrane arm which is embedded in the lipid bilayer and involved in proton translocation.</text>
</comment>
<comment type="catalytic activity">
    <reaction evidence="1">
        <text>a ubiquinone + NADH + 5 H(+)(in) = a ubiquinol + NAD(+) + 4 H(+)(out)</text>
        <dbReference type="Rhea" id="RHEA:29091"/>
        <dbReference type="Rhea" id="RHEA-COMP:9565"/>
        <dbReference type="Rhea" id="RHEA-COMP:9566"/>
        <dbReference type="ChEBI" id="CHEBI:15378"/>
        <dbReference type="ChEBI" id="CHEBI:16389"/>
        <dbReference type="ChEBI" id="CHEBI:17976"/>
        <dbReference type="ChEBI" id="CHEBI:57540"/>
        <dbReference type="ChEBI" id="CHEBI:57945"/>
        <dbReference type="EC" id="7.1.1.2"/>
    </reaction>
    <physiologicalReaction direction="left-to-right" evidence="1">
        <dbReference type="Rhea" id="RHEA:29092"/>
    </physiologicalReaction>
</comment>
<comment type="subunit">
    <text evidence="2">Core subunit of respiratory chain NADH dehydrogenase (Complex I) which is composed of 45 different subunits.</text>
</comment>
<comment type="subcellular location">
    <subcellularLocation>
        <location evidence="2">Mitochondrion inner membrane</location>
        <topology evidence="3">Multi-pass membrane protein</topology>
    </subcellularLocation>
</comment>
<comment type="similarity">
    <text evidence="4">Belongs to the complex I subunit 4L family.</text>
</comment>
<protein>
    <recommendedName>
        <fullName>NADH-ubiquinone oxidoreductase chain 4L</fullName>
        <ecNumber>7.1.1.2</ecNumber>
    </recommendedName>
    <alternativeName>
        <fullName>NADH dehydrogenase subunit 4L</fullName>
    </alternativeName>
</protein>